<evidence type="ECO:0000255" key="1">
    <source>
        <dbReference type="HAMAP-Rule" id="MF_00508"/>
    </source>
</evidence>
<evidence type="ECO:0000305" key="2"/>
<proteinExistence type="inferred from homology"/>
<comment type="function">
    <text evidence="1">Involved in the binding of tRNA to the ribosomes.</text>
</comment>
<comment type="subunit">
    <text evidence="1">Part of the 30S ribosomal subunit.</text>
</comment>
<comment type="similarity">
    <text evidence="1">Belongs to the universal ribosomal protein uS10 family.</text>
</comment>
<accession>Q6ACZ4</accession>
<organism>
    <name type="scientific">Leifsonia xyli subsp. xyli (strain CTCB07)</name>
    <dbReference type="NCBI Taxonomy" id="281090"/>
    <lineage>
        <taxon>Bacteria</taxon>
        <taxon>Bacillati</taxon>
        <taxon>Actinomycetota</taxon>
        <taxon>Actinomycetes</taxon>
        <taxon>Micrococcales</taxon>
        <taxon>Microbacteriaceae</taxon>
        <taxon>Leifsonia</taxon>
    </lineage>
</organism>
<keyword id="KW-1185">Reference proteome</keyword>
<keyword id="KW-0687">Ribonucleoprotein</keyword>
<keyword id="KW-0689">Ribosomal protein</keyword>
<feature type="chain" id="PRO_0000237058" description="Small ribosomal subunit protein uS10">
    <location>
        <begin position="1"/>
        <end position="102"/>
    </location>
</feature>
<dbReference type="EMBL" id="AE016822">
    <property type="protein sequence ID" value="AAT89750.1"/>
    <property type="molecule type" value="Genomic_DNA"/>
</dbReference>
<dbReference type="RefSeq" id="WP_011186736.1">
    <property type="nucleotide sequence ID" value="NC_006087.1"/>
</dbReference>
<dbReference type="SMR" id="Q6ACZ4"/>
<dbReference type="STRING" id="281090.Lxx20340"/>
<dbReference type="KEGG" id="lxx:Lxx20340"/>
<dbReference type="eggNOG" id="COG0051">
    <property type="taxonomic scope" value="Bacteria"/>
</dbReference>
<dbReference type="HOGENOM" id="CLU_122625_1_3_11"/>
<dbReference type="Proteomes" id="UP000001306">
    <property type="component" value="Chromosome"/>
</dbReference>
<dbReference type="GO" id="GO:1990904">
    <property type="term" value="C:ribonucleoprotein complex"/>
    <property type="evidence" value="ECO:0007669"/>
    <property type="project" value="UniProtKB-KW"/>
</dbReference>
<dbReference type="GO" id="GO:0005840">
    <property type="term" value="C:ribosome"/>
    <property type="evidence" value="ECO:0007669"/>
    <property type="project" value="UniProtKB-KW"/>
</dbReference>
<dbReference type="GO" id="GO:0003735">
    <property type="term" value="F:structural constituent of ribosome"/>
    <property type="evidence" value="ECO:0007669"/>
    <property type="project" value="InterPro"/>
</dbReference>
<dbReference type="GO" id="GO:0000049">
    <property type="term" value="F:tRNA binding"/>
    <property type="evidence" value="ECO:0007669"/>
    <property type="project" value="UniProtKB-UniRule"/>
</dbReference>
<dbReference type="GO" id="GO:0006412">
    <property type="term" value="P:translation"/>
    <property type="evidence" value="ECO:0007669"/>
    <property type="project" value="UniProtKB-UniRule"/>
</dbReference>
<dbReference type="FunFam" id="3.30.70.600:FF:000001">
    <property type="entry name" value="30S ribosomal protein S10"/>
    <property type="match status" value="1"/>
</dbReference>
<dbReference type="Gene3D" id="3.30.70.600">
    <property type="entry name" value="Ribosomal protein S10 domain"/>
    <property type="match status" value="1"/>
</dbReference>
<dbReference type="HAMAP" id="MF_00508">
    <property type="entry name" value="Ribosomal_uS10"/>
    <property type="match status" value="1"/>
</dbReference>
<dbReference type="InterPro" id="IPR001848">
    <property type="entry name" value="Ribosomal_uS10"/>
</dbReference>
<dbReference type="InterPro" id="IPR018268">
    <property type="entry name" value="Ribosomal_uS10_CS"/>
</dbReference>
<dbReference type="InterPro" id="IPR027486">
    <property type="entry name" value="Ribosomal_uS10_dom"/>
</dbReference>
<dbReference type="InterPro" id="IPR036838">
    <property type="entry name" value="Ribosomal_uS10_dom_sf"/>
</dbReference>
<dbReference type="NCBIfam" id="NF001861">
    <property type="entry name" value="PRK00596.1"/>
    <property type="match status" value="1"/>
</dbReference>
<dbReference type="NCBIfam" id="TIGR01049">
    <property type="entry name" value="rpsJ_bact"/>
    <property type="match status" value="1"/>
</dbReference>
<dbReference type="PANTHER" id="PTHR11700">
    <property type="entry name" value="30S RIBOSOMAL PROTEIN S10 FAMILY MEMBER"/>
    <property type="match status" value="1"/>
</dbReference>
<dbReference type="Pfam" id="PF00338">
    <property type="entry name" value="Ribosomal_S10"/>
    <property type="match status" value="1"/>
</dbReference>
<dbReference type="PRINTS" id="PR00971">
    <property type="entry name" value="RIBOSOMALS10"/>
</dbReference>
<dbReference type="SMART" id="SM01403">
    <property type="entry name" value="Ribosomal_S10"/>
    <property type="match status" value="1"/>
</dbReference>
<dbReference type="SUPFAM" id="SSF54999">
    <property type="entry name" value="Ribosomal protein S10"/>
    <property type="match status" value="1"/>
</dbReference>
<dbReference type="PROSITE" id="PS00361">
    <property type="entry name" value="RIBOSOMAL_S10"/>
    <property type="match status" value="1"/>
</dbReference>
<gene>
    <name evidence="1" type="primary">rpsJ</name>
    <name type="ordered locus">Lxx20340</name>
</gene>
<reference key="1">
    <citation type="journal article" date="2004" name="Mol. Plant Microbe Interact.">
        <title>The genome sequence of the Gram-positive sugarcane pathogen Leifsonia xyli subsp. xyli.</title>
        <authorList>
            <person name="Monteiro-Vitorello C.B."/>
            <person name="Camargo L.E.A."/>
            <person name="Van Sluys M.A."/>
            <person name="Kitajima J.P."/>
            <person name="Truffi D."/>
            <person name="do Amaral A.M."/>
            <person name="Harakava R."/>
            <person name="de Oliveira J.C.F."/>
            <person name="Wood D."/>
            <person name="de Oliveira M.C."/>
            <person name="Miyaki C.Y."/>
            <person name="Takita M.A."/>
            <person name="da Silva A.C.R."/>
            <person name="Furlan L.R."/>
            <person name="Carraro D.M."/>
            <person name="Camarotte G."/>
            <person name="Almeida N.F. Jr."/>
            <person name="Carrer H."/>
            <person name="Coutinho L.L."/>
            <person name="El-Dorry H.A."/>
            <person name="Ferro M.I.T."/>
            <person name="Gagliardi P.R."/>
            <person name="Giglioti E."/>
            <person name="Goldman M.H.S."/>
            <person name="Goldman G.H."/>
            <person name="Kimura E.T."/>
            <person name="Ferro E.S."/>
            <person name="Kuramae E.E."/>
            <person name="Lemos E.G.M."/>
            <person name="Lemos M.V.F."/>
            <person name="Mauro S.M.Z."/>
            <person name="Machado M.A."/>
            <person name="Marino C.L."/>
            <person name="Menck C.F."/>
            <person name="Nunes L.R."/>
            <person name="Oliveira R.C."/>
            <person name="Pereira G.G."/>
            <person name="Siqueira W."/>
            <person name="de Souza A.A."/>
            <person name="Tsai S.M."/>
            <person name="Zanca A.S."/>
            <person name="Simpson A.J.G."/>
            <person name="Brumbley S.M."/>
            <person name="Setubal J.C."/>
        </authorList>
    </citation>
    <scope>NUCLEOTIDE SEQUENCE [LARGE SCALE GENOMIC DNA]</scope>
    <source>
        <strain>CTCB07</strain>
    </source>
</reference>
<sequence>MAGQKIRIRLKSYDHAGLDTSARKIVDTVTRAGATVVGPVPLPTEKNVVCVIRSPHKYKDSREHFEMRTHKRLIDIVDPTPKAVDSLMRLDLPADVNIEIKL</sequence>
<protein>
    <recommendedName>
        <fullName evidence="1">Small ribosomal subunit protein uS10</fullName>
    </recommendedName>
    <alternativeName>
        <fullName evidence="2">30S ribosomal protein S10</fullName>
    </alternativeName>
</protein>
<name>RS10_LEIXX</name>